<evidence type="ECO:0000250" key="1"/>
<evidence type="ECO:0000250" key="2">
    <source>
        <dbReference type="UniProtKB" id="Q9NXR1"/>
    </source>
</evidence>
<evidence type="ECO:0000255" key="3"/>
<evidence type="ECO:0000256" key="4">
    <source>
        <dbReference type="SAM" id="MobiDB-lite"/>
    </source>
</evidence>
<evidence type="ECO:0000269" key="5">
    <source>
    </source>
</evidence>
<evidence type="ECO:0000269" key="6">
    <source>
    </source>
</evidence>
<evidence type="ECO:0000269" key="7">
    <source>
    </source>
</evidence>
<evidence type="ECO:0000269" key="8">
    <source>
    </source>
</evidence>
<evidence type="ECO:0000303" key="9">
    <source>
    </source>
</evidence>
<evidence type="ECO:0000303" key="10">
    <source>
    </source>
</evidence>
<evidence type="ECO:0000305" key="11"/>
<evidence type="ECO:0000312" key="12">
    <source>
        <dbReference type="MGI" id="MGI:1914453"/>
    </source>
</evidence>
<organism>
    <name type="scientific">Mus musculus</name>
    <name type="common">Mouse</name>
    <dbReference type="NCBI Taxonomy" id="10090"/>
    <lineage>
        <taxon>Eukaryota</taxon>
        <taxon>Metazoa</taxon>
        <taxon>Chordata</taxon>
        <taxon>Craniata</taxon>
        <taxon>Vertebrata</taxon>
        <taxon>Euteleostomi</taxon>
        <taxon>Mammalia</taxon>
        <taxon>Eutheria</taxon>
        <taxon>Euarchontoglires</taxon>
        <taxon>Glires</taxon>
        <taxon>Rodentia</taxon>
        <taxon>Myomorpha</taxon>
        <taxon>Muroidea</taxon>
        <taxon>Muridae</taxon>
        <taxon>Murinae</taxon>
        <taxon>Mus</taxon>
        <taxon>Mus</taxon>
    </lineage>
</organism>
<gene>
    <name evidence="12" type="primary">Nde1</name>
    <name type="synonym">Nude</name>
</gene>
<feature type="chain" id="PRO_0000240203" description="Nuclear distribution protein nudE homolog 1">
    <location>
        <begin position="1"/>
        <end position="344"/>
    </location>
</feature>
<feature type="region of interest" description="Self-association">
    <location>
        <begin position="1"/>
        <end position="93"/>
    </location>
</feature>
<feature type="region of interest" description="Interaction with PAFAH1B1">
    <location>
        <begin position="88"/>
        <end position="156"/>
    </location>
</feature>
<feature type="region of interest" description="Interaction with CENPF">
    <location>
        <begin position="167"/>
        <end position="290"/>
    </location>
</feature>
<feature type="region of interest" description="Disordered" evidence="4">
    <location>
        <begin position="181"/>
        <end position="246"/>
    </location>
</feature>
<feature type="region of interest" description="Disordered" evidence="4">
    <location>
        <begin position="279"/>
        <end position="337"/>
    </location>
</feature>
<feature type="coiled-coil region" evidence="3">
    <location>
        <begin position="18"/>
        <end position="188"/>
    </location>
</feature>
<feature type="compositionally biased region" description="Polar residues" evidence="4">
    <location>
        <begin position="279"/>
        <end position="289"/>
    </location>
</feature>
<feature type="compositionally biased region" description="Basic and acidic residues" evidence="4">
    <location>
        <begin position="296"/>
        <end position="305"/>
    </location>
</feature>
<feature type="compositionally biased region" description="Low complexity" evidence="4">
    <location>
        <begin position="324"/>
        <end position="336"/>
    </location>
</feature>
<feature type="modified residue" description="Phosphoserine" evidence="2">
    <location>
        <position position="211"/>
    </location>
</feature>
<feature type="modified residue" description="Phosphothreonine" evidence="2">
    <location>
        <position position="215"/>
    </location>
</feature>
<feature type="modified residue" description="Phosphothreonine" evidence="2">
    <location>
        <position position="228"/>
    </location>
</feature>
<feature type="modified residue" description="Phosphoserine" evidence="2">
    <location>
        <position position="239"/>
    </location>
</feature>
<feature type="modified residue" description="Phosphothreonine" evidence="2">
    <location>
        <position position="243"/>
    </location>
</feature>
<feature type="modified residue" description="Phosphothreonine" evidence="8">
    <location>
        <position position="246"/>
    </location>
</feature>
<feature type="modified residue" description="Phosphoserine" evidence="2">
    <location>
        <position position="282"/>
    </location>
</feature>
<feature type="modified residue" description="Phosphoserine" evidence="2">
    <location>
        <position position="309"/>
    </location>
</feature>
<feature type="lipid moiety-binding region" description="S-palmitoyl cysteine; by ZDHHC2, ZDHHC3 and ZDHHC7" evidence="1">
    <location>
        <position position="274"/>
    </location>
</feature>
<feature type="splice variant" id="VSP_019306" description="In isoform 4." evidence="9">
    <location>
        <begin position="1"/>
        <end position="132"/>
    </location>
</feature>
<feature type="splice variant" id="VSP_019307" description="In isoform 2." evidence="10">
    <original>SGK</original>
    <variation>REN</variation>
    <location>
        <begin position="315"/>
        <end position="317"/>
    </location>
</feature>
<feature type="splice variant" id="VSP_019308" description="In isoform 3." evidence="10">
    <original>GK</original>
    <variation>LP</variation>
    <location>
        <begin position="316"/>
        <end position="317"/>
    </location>
</feature>
<feature type="splice variant" id="VSP_019309" description="In isoform 2 and isoform 3." evidence="10">
    <location>
        <begin position="318"/>
        <end position="344"/>
    </location>
</feature>
<accession>Q9CZA6</accession>
<accession>Q3UBS6</accession>
<accession>Q3UIC1</accession>
<accession>Q9ERR0</accession>
<comment type="function">
    <text evidence="2 7">Required for centrosome duplication and formation and function of the mitotic spindle. Essential for the development of the cerebral cortex. May regulate the production of neurons by controlling the orientation of the mitotic spindle during division of cortical neuronal progenitors of the proliferative ventricular zone of the brain. Orientation of the division plane perpendicular to the layers of the cortex gives rise to two proliferative neuronal progenitors whereas parallel orientation of the division plane yields one proliferative neuronal progenitor and a postmitotic neuron. A premature shift towards a neuronal fate within the progenitor population may result in an overall reduction in the final number of neurons and an increase in the number of neurons in the deeper layers of the cortex. Acts as a RAB9A/B effector that tethers RAB9-associated late endosomes to the dynein motor for their retrograde transport to the trans-Golgi network (By similarity).</text>
</comment>
<comment type="subunit">
    <text evidence="2 5 7">Homodimer (By similarity). Interacts with dynactin and PCM1 (PubMed:15473967). Interacts with CENPF, LIS1, CNTRL, dynein, tubulin gamma, PAFAH1B1, PCNT, SLMAP and TCP1 (PubMed:11163258, PubMed:15473967). Interacts with ZNF365 (By similarity). Interacts with RAB9A; the interaction leads to RAB9A-dynein motor tethering (By similarity). Interacts (via C-terminus) with MCRS1 (via C-terminus); phosphorylation of NDE1 inhibits the interaction (By similarity).</text>
</comment>
<comment type="interaction">
    <interactant intactId="EBI-309934">
        <id>Q9CZA6</id>
    </interactant>
    <interactant intactId="EBI-2211248">
        <id>Q155P7</id>
        <label>Cenpf</label>
    </interactant>
    <organismsDiffer>false</organismsDiffer>
    <experiments>8</experiments>
</comment>
<comment type="interaction">
    <interactant intactId="EBI-309934">
        <id>Q9CZA6</id>
    </interactant>
    <interactant intactId="EBI-529989">
        <id>Q9NRI5</id>
        <label>DISC1</label>
    </interactant>
    <organismsDiffer>true</organismsDiffer>
    <experiments>2</experiments>
</comment>
<comment type="interaction">
    <interactant intactId="EBI-309934">
        <id>Q9CZA6</id>
    </interactant>
    <interactant intactId="EBI-366267">
        <id>O14576</id>
        <label>DYNC1I1</label>
    </interactant>
    <organismsDiffer>true</organismsDiffer>
    <experiments>2</experiments>
</comment>
<comment type="interaction">
    <interactant intactId="EBI-309934">
        <id>Q9CZA6</id>
    </interactant>
    <interactant intactId="EBI-720620">
        <id>P43034</id>
        <label>PAFAH1B1</label>
    </interactant>
    <organismsDiffer>true</organismsDiffer>
    <experiments>6</experiments>
</comment>
<comment type="interaction">
    <interactant intactId="EBI-15949673">
        <id>Q9CZA6-1</id>
    </interactant>
    <interactant intactId="EBI-295928">
        <id>P11531</id>
        <label>Dmd</label>
    </interactant>
    <organismsDiffer>false</organismsDiffer>
    <experiments>2</experiments>
</comment>
<comment type="interaction">
    <interactant intactId="EBI-15949673">
        <id>Q9CZA6-1</id>
    </interactant>
    <interactant intactId="EBI-15949679">
        <id>E9Q6R7</id>
        <label>Utrn</label>
    </interactant>
    <organismsDiffer>false</organismsDiffer>
    <experiments>4</experiments>
</comment>
<comment type="subcellular location">
    <subcellularLocation>
        <location>Cytoplasm</location>
        <location>Cytoskeleton</location>
    </subcellularLocation>
    <subcellularLocation>
        <location>Cytoplasm</location>
        <location>Cytoskeleton</location>
        <location>Microtubule organizing center</location>
        <location>Centrosome</location>
    </subcellularLocation>
    <subcellularLocation>
        <location>Cytoplasm</location>
        <location>Cytoskeleton</location>
        <location>Spindle</location>
    </subcellularLocation>
    <subcellularLocation>
        <location>Chromosome</location>
        <location>Centromere</location>
        <location>Kinetochore</location>
    </subcellularLocation>
    <subcellularLocation>
        <location>Cleavage furrow</location>
    </subcellularLocation>
    <subcellularLocation>
        <location evidence="2">Cytoplasmic vesicle membrane</location>
    </subcellularLocation>
    <text evidence="2">Localizes to the interphase and S phase centrosome. During mitosis, partially associated with the mitotic spindle. Concentrates at the plus ends of microtubules coincident with kinetochores in metaphase and anaphase in a CENPF-dependent manner. Also localizes to the cleavage furrow during cytokinesis. Also localizes to the cleavage furrow during cytokinesis. Colocalizes with RAB9A to membrane vesicles (By similarity).</text>
</comment>
<comment type="alternative products">
    <event type="alternative splicing"/>
    <isoform>
        <id>Q9CZA6-1</id>
        <name>1</name>
        <sequence type="displayed"/>
    </isoform>
    <isoform>
        <id>Q9CZA6-2</id>
        <name>2</name>
        <sequence type="described" ref="VSP_019307 VSP_019309"/>
    </isoform>
    <isoform>
        <id>Q9CZA6-3</id>
        <name>3</name>
        <sequence type="described" ref="VSP_019308 VSP_019309"/>
    </isoform>
    <isoform>
        <id>Q9CZA6-4</id>
        <name>4</name>
        <sequence type="described" ref="VSP_019306"/>
    </isoform>
</comment>
<comment type="tissue specificity">
    <text evidence="5 6">Highly expressed in ovary. Also expressed in brain, heart, kidney, large intestine, liver, lung, small intestine and testis.</text>
</comment>
<comment type="developmental stage">
    <text evidence="5 7">Widely expressed in the developing brain, particularly in the neural progenitor cells of ventricular zone and the intermediate zone of the cerebral cortex. Expression peaks at 11 dpc and declines at 15 dpc and 17 dpc. After completion of neuronal migration expression is reduced in the cortex.</text>
</comment>
<comment type="PTM">
    <text evidence="2 8">Phosphorylated in mitosis (By similarity). Phosphorylation at Thr-246 is essential for the G2/M transition (PubMed:21529751).</text>
</comment>
<comment type="miscellaneous">
    <text>Homozygous loss of this protein results in microcephaly that preferentially affects the cerebral cortex. Affected animals have a smaller cortex with reduced superficial cortical layers, although cortical lamination is mostly preserved. The smaller cortex size seems to reflect both reduced progenitor cell division and altered specification of cell fates following progenitor cell division.</text>
</comment>
<comment type="similarity">
    <text evidence="11">Belongs to the nudE family.</text>
</comment>
<proteinExistence type="evidence at protein level"/>
<dbReference type="EMBL" id="AF322073">
    <property type="protein sequence ID" value="AAK08067.1"/>
    <property type="molecule type" value="mRNA"/>
</dbReference>
<dbReference type="EMBL" id="AF290473">
    <property type="protein sequence ID" value="AAG10062.1"/>
    <property type="molecule type" value="mRNA"/>
</dbReference>
<dbReference type="EMBL" id="AK012830">
    <property type="protein sequence ID" value="BAB28499.1"/>
    <property type="molecule type" value="mRNA"/>
</dbReference>
<dbReference type="EMBL" id="AK037289">
    <property type="protein sequence ID" value="BAE20509.1"/>
    <property type="molecule type" value="mRNA"/>
</dbReference>
<dbReference type="EMBL" id="AK146982">
    <property type="protein sequence ID" value="BAE27585.1"/>
    <property type="molecule type" value="mRNA"/>
</dbReference>
<dbReference type="EMBL" id="AK150826">
    <property type="protein sequence ID" value="BAE29888.1"/>
    <property type="molecule type" value="mRNA"/>
</dbReference>
<dbReference type="EMBL" id="AK169743">
    <property type="protein sequence ID" value="BAE41342.1"/>
    <property type="molecule type" value="mRNA"/>
</dbReference>
<dbReference type="EMBL" id="BC023267">
    <property type="protein sequence ID" value="AAH23267.1"/>
    <property type="molecule type" value="mRNA"/>
</dbReference>
<dbReference type="CCDS" id="CCDS37263.2">
    <molecule id="Q9CZA6-1"/>
</dbReference>
<dbReference type="CCDS" id="CCDS49770.1">
    <molecule id="Q9CZA6-3"/>
</dbReference>
<dbReference type="CCDS" id="CCDS70688.1">
    <molecule id="Q9CZA6-2"/>
</dbReference>
<dbReference type="RefSeq" id="NP_001107557.1">
    <molecule id="Q9CZA6-3"/>
    <property type="nucleotide sequence ID" value="NM_001114085.1"/>
</dbReference>
<dbReference type="RefSeq" id="NP_001272432.1">
    <molecule id="Q9CZA6-2"/>
    <property type="nucleotide sequence ID" value="NM_001285503.1"/>
</dbReference>
<dbReference type="RefSeq" id="NP_001272433.1">
    <molecule id="Q9CZA6-4"/>
    <property type="nucleotide sequence ID" value="NM_001285504.1"/>
</dbReference>
<dbReference type="RefSeq" id="NP_075806.2">
    <molecule id="Q9CZA6-1"/>
    <property type="nucleotide sequence ID" value="NM_023317.2"/>
</dbReference>
<dbReference type="RefSeq" id="XP_011244302.1">
    <property type="nucleotide sequence ID" value="XM_011246000.1"/>
</dbReference>
<dbReference type="SMR" id="Q9CZA6"/>
<dbReference type="BioGRID" id="212013">
    <property type="interactions" value="21"/>
</dbReference>
<dbReference type="DIP" id="DIP-54638N"/>
<dbReference type="FunCoup" id="Q9CZA6">
    <property type="interactions" value="1036"/>
</dbReference>
<dbReference type="IntAct" id="Q9CZA6">
    <property type="interactions" value="20"/>
</dbReference>
<dbReference type="MINT" id="Q9CZA6"/>
<dbReference type="STRING" id="10090.ENSMUSP00000023359"/>
<dbReference type="iPTMnet" id="Q9CZA6"/>
<dbReference type="PhosphoSitePlus" id="Q9CZA6"/>
<dbReference type="SwissPalm" id="Q9CZA6"/>
<dbReference type="jPOST" id="Q9CZA6"/>
<dbReference type="PaxDb" id="10090-ENSMUSP00000023359"/>
<dbReference type="PeptideAtlas" id="Q9CZA6"/>
<dbReference type="ProteomicsDB" id="287619">
    <molecule id="Q9CZA6-1"/>
</dbReference>
<dbReference type="ProteomicsDB" id="287620">
    <molecule id="Q9CZA6-2"/>
</dbReference>
<dbReference type="ProteomicsDB" id="287621">
    <molecule id="Q9CZA6-3"/>
</dbReference>
<dbReference type="ProteomicsDB" id="287622">
    <molecule id="Q9CZA6-4"/>
</dbReference>
<dbReference type="Pumba" id="Q9CZA6"/>
<dbReference type="Antibodypedia" id="11751">
    <property type="antibodies" value="279 antibodies from 32 providers"/>
</dbReference>
<dbReference type="Ensembl" id="ENSMUST00000023359.13">
    <molecule id="Q9CZA6-1"/>
    <property type="protein sequence ID" value="ENSMUSP00000023359.7"/>
    <property type="gene ID" value="ENSMUSG00000022678.17"/>
</dbReference>
<dbReference type="Ensembl" id="ENSMUST00000115795.9">
    <molecule id="Q9CZA6-2"/>
    <property type="protein sequence ID" value="ENSMUSP00000111461.3"/>
    <property type="gene ID" value="ENSMUSG00000022678.17"/>
</dbReference>
<dbReference type="Ensembl" id="ENSMUST00000117958.8">
    <molecule id="Q9CZA6-3"/>
    <property type="protein sequence ID" value="ENSMUSP00000112817.2"/>
    <property type="gene ID" value="ENSMUSG00000022678.17"/>
</dbReference>
<dbReference type="GeneID" id="67203"/>
<dbReference type="KEGG" id="mmu:67203"/>
<dbReference type="UCSC" id="uc007ygy.2">
    <molecule id="Q9CZA6-1"/>
    <property type="organism name" value="mouse"/>
</dbReference>
<dbReference type="UCSC" id="uc007yha.2">
    <molecule id="Q9CZA6-3"/>
    <property type="organism name" value="mouse"/>
</dbReference>
<dbReference type="UCSC" id="uc007yhb.3">
    <molecule id="Q9CZA6-2"/>
    <property type="organism name" value="mouse"/>
</dbReference>
<dbReference type="AGR" id="MGI:1914453"/>
<dbReference type="CTD" id="54820"/>
<dbReference type="MGI" id="MGI:1914453">
    <property type="gene designation" value="Nde1"/>
</dbReference>
<dbReference type="VEuPathDB" id="HostDB:ENSMUSG00000022678"/>
<dbReference type="eggNOG" id="KOG1853">
    <property type="taxonomic scope" value="Eukaryota"/>
</dbReference>
<dbReference type="GeneTree" id="ENSGT00390000000111"/>
<dbReference type="HOGENOM" id="CLU_057872_1_0_1"/>
<dbReference type="InParanoid" id="Q9CZA6"/>
<dbReference type="OMA" id="EQTVNRR"/>
<dbReference type="OrthoDB" id="5877028at2759"/>
<dbReference type="PhylomeDB" id="Q9CZA6"/>
<dbReference type="TreeFam" id="TF325693"/>
<dbReference type="Reactome" id="R-MMU-141444">
    <property type="pathway name" value="Amplification of signal from unattached kinetochores via a MAD2 inhibitory signal"/>
</dbReference>
<dbReference type="Reactome" id="R-MMU-2467813">
    <property type="pathway name" value="Separation of Sister Chromatids"/>
</dbReference>
<dbReference type="Reactome" id="R-MMU-2500257">
    <property type="pathway name" value="Resolution of Sister Chromatid Cohesion"/>
</dbReference>
<dbReference type="Reactome" id="R-MMU-2565942">
    <property type="pathway name" value="Regulation of PLK1 Activity at G2/M Transition"/>
</dbReference>
<dbReference type="Reactome" id="R-MMU-380259">
    <property type="pathway name" value="Loss of Nlp from mitotic centrosomes"/>
</dbReference>
<dbReference type="Reactome" id="R-MMU-380270">
    <property type="pathway name" value="Recruitment of mitotic centrosome proteins and complexes"/>
</dbReference>
<dbReference type="Reactome" id="R-MMU-380284">
    <property type="pathway name" value="Loss of proteins required for interphase microtubule organization from the centrosome"/>
</dbReference>
<dbReference type="Reactome" id="R-MMU-380320">
    <property type="pathway name" value="Recruitment of NuMA to mitotic centrosomes"/>
</dbReference>
<dbReference type="Reactome" id="R-MMU-5620912">
    <property type="pathway name" value="Anchoring of the basal body to the plasma membrane"/>
</dbReference>
<dbReference type="Reactome" id="R-MMU-5663220">
    <property type="pathway name" value="RHO GTPases Activate Formins"/>
</dbReference>
<dbReference type="Reactome" id="R-MMU-68877">
    <property type="pathway name" value="Mitotic Prometaphase"/>
</dbReference>
<dbReference type="Reactome" id="R-MMU-8854518">
    <property type="pathway name" value="AURKA Activation by TPX2"/>
</dbReference>
<dbReference type="Reactome" id="R-MMU-9648025">
    <property type="pathway name" value="EML4 and NUDC in mitotic spindle formation"/>
</dbReference>
<dbReference type="BioGRID-ORCS" id="67203">
    <property type="hits" value="0 hits in 77 CRISPR screens"/>
</dbReference>
<dbReference type="CD-CODE" id="01CA17F3">
    <property type="entry name" value="Centrosome"/>
</dbReference>
<dbReference type="ChiTaRS" id="Nde1">
    <property type="organism name" value="mouse"/>
</dbReference>
<dbReference type="PRO" id="PR:Q9CZA6"/>
<dbReference type="Proteomes" id="UP000000589">
    <property type="component" value="Chromosome 16"/>
</dbReference>
<dbReference type="RNAct" id="Q9CZA6">
    <property type="molecule type" value="protein"/>
</dbReference>
<dbReference type="Bgee" id="ENSMUSG00000022678">
    <property type="expression patterns" value="Expressed in ventricular zone and 269 other cell types or tissues"/>
</dbReference>
<dbReference type="ExpressionAtlas" id="Q9CZA6">
    <property type="expression patterns" value="baseline and differential"/>
</dbReference>
<dbReference type="GO" id="GO:0005813">
    <property type="term" value="C:centrosome"/>
    <property type="evidence" value="ECO:0000314"/>
    <property type="project" value="MGI"/>
</dbReference>
<dbReference type="GO" id="GO:0032154">
    <property type="term" value="C:cleavage furrow"/>
    <property type="evidence" value="ECO:0007669"/>
    <property type="project" value="UniProtKB-SubCell"/>
</dbReference>
<dbReference type="GO" id="GO:0030659">
    <property type="term" value="C:cytoplasmic vesicle membrane"/>
    <property type="evidence" value="ECO:0007669"/>
    <property type="project" value="UniProtKB-SubCell"/>
</dbReference>
<dbReference type="GO" id="GO:0000776">
    <property type="term" value="C:kinetochore"/>
    <property type="evidence" value="ECO:0007669"/>
    <property type="project" value="UniProtKB-KW"/>
</dbReference>
<dbReference type="GO" id="GO:0005874">
    <property type="term" value="C:microtubule"/>
    <property type="evidence" value="ECO:0007669"/>
    <property type="project" value="UniProtKB-KW"/>
</dbReference>
<dbReference type="GO" id="GO:0005815">
    <property type="term" value="C:microtubule organizing center"/>
    <property type="evidence" value="ECO:0000314"/>
    <property type="project" value="UniProtKB"/>
</dbReference>
<dbReference type="GO" id="GO:0005819">
    <property type="term" value="C:spindle"/>
    <property type="evidence" value="ECO:0000314"/>
    <property type="project" value="MGI"/>
</dbReference>
<dbReference type="GO" id="GO:0031616">
    <property type="term" value="C:spindle pole centrosome"/>
    <property type="evidence" value="ECO:0000314"/>
    <property type="project" value="UniProtKB"/>
</dbReference>
<dbReference type="GO" id="GO:0045202">
    <property type="term" value="C:synapse"/>
    <property type="evidence" value="ECO:0000314"/>
    <property type="project" value="MGI"/>
</dbReference>
<dbReference type="GO" id="GO:0042802">
    <property type="term" value="F:identical protein binding"/>
    <property type="evidence" value="ECO:0000353"/>
    <property type="project" value="MGI"/>
</dbReference>
<dbReference type="GO" id="GO:0008017">
    <property type="term" value="F:microtubule binding"/>
    <property type="evidence" value="ECO:0000315"/>
    <property type="project" value="UniProtKB"/>
</dbReference>
<dbReference type="GO" id="GO:0019904">
    <property type="term" value="F:protein domain specific binding"/>
    <property type="evidence" value="ECO:0007669"/>
    <property type="project" value="Ensembl"/>
</dbReference>
<dbReference type="GO" id="GO:0051301">
    <property type="term" value="P:cell division"/>
    <property type="evidence" value="ECO:0007669"/>
    <property type="project" value="UniProtKB-KW"/>
</dbReference>
<dbReference type="GO" id="GO:0051298">
    <property type="term" value="P:centrosome duplication"/>
    <property type="evidence" value="ECO:0000315"/>
    <property type="project" value="UniProtKB"/>
</dbReference>
<dbReference type="GO" id="GO:0021987">
    <property type="term" value="P:cerebral cortex development"/>
    <property type="evidence" value="ECO:0000316"/>
    <property type="project" value="MGI"/>
</dbReference>
<dbReference type="GO" id="GO:0051303">
    <property type="term" value="P:establishment of chromosome localization"/>
    <property type="evidence" value="ECO:0007669"/>
    <property type="project" value="Ensembl"/>
</dbReference>
<dbReference type="GO" id="GO:0000132">
    <property type="term" value="P:establishment of mitotic spindle orientation"/>
    <property type="evidence" value="ECO:0007669"/>
    <property type="project" value="Ensembl"/>
</dbReference>
<dbReference type="GO" id="GO:0030900">
    <property type="term" value="P:forebrain development"/>
    <property type="evidence" value="ECO:0000315"/>
    <property type="project" value="MGI"/>
</dbReference>
<dbReference type="GO" id="GO:0007020">
    <property type="term" value="P:microtubule nucleation"/>
    <property type="evidence" value="ECO:0000314"/>
    <property type="project" value="MGI"/>
</dbReference>
<dbReference type="GO" id="GO:0031023">
    <property type="term" value="P:microtubule organizing center organization"/>
    <property type="evidence" value="ECO:0000315"/>
    <property type="project" value="UniProtKB"/>
</dbReference>
<dbReference type="GO" id="GO:0007405">
    <property type="term" value="P:neuroblast proliferation"/>
    <property type="evidence" value="ECO:0000315"/>
    <property type="project" value="MGI"/>
</dbReference>
<dbReference type="GO" id="GO:0001764">
    <property type="term" value="P:neuron migration"/>
    <property type="evidence" value="ECO:0000315"/>
    <property type="project" value="UniProtKB"/>
</dbReference>
<dbReference type="GO" id="GO:0047496">
    <property type="term" value="P:vesicle transport along microtubule"/>
    <property type="evidence" value="ECO:0000316"/>
    <property type="project" value="MGI"/>
</dbReference>
<dbReference type="Gene3D" id="6.10.250.1080">
    <property type="match status" value="1"/>
</dbReference>
<dbReference type="InterPro" id="IPR033494">
    <property type="entry name" value="NUDE"/>
</dbReference>
<dbReference type="InterPro" id="IPR006964">
    <property type="entry name" value="NUDE_dom"/>
</dbReference>
<dbReference type="PANTHER" id="PTHR10921">
    <property type="entry name" value="NUCLEAR DISTRIBUTION PROTEIN NUDE HOMOLOG 1"/>
    <property type="match status" value="1"/>
</dbReference>
<dbReference type="PANTHER" id="PTHR10921:SF2">
    <property type="entry name" value="NUCLEAR DISTRIBUTION PROTEIN NUDE HOMOLOG 1"/>
    <property type="match status" value="1"/>
</dbReference>
<dbReference type="Pfam" id="PF04880">
    <property type="entry name" value="NUDE_C"/>
    <property type="match status" value="1"/>
</dbReference>
<protein>
    <recommendedName>
        <fullName>Nuclear distribution protein nudE homolog 1</fullName>
        <shortName>NudE</shortName>
        <shortName>mNudE</shortName>
    </recommendedName>
</protein>
<sequence length="344" mass="38523">MEDSGKTFESEEEETNYWRDLAMTYKQRAENTQEELREFQEGSREYEAELEAQLQQIETRNRDLLSENNRLRMELESVKEKFEMQHSEGYRQISALEDDLAQTKAIKDQLQKYIRELEQANDDLERAKRATIMSLEDFEQRLNQAIERNAFLESELDEKENLLESVQRLKDEARDLRQELAVQQKQDKPRTPMPGSGQAKRTDMAVQATGSVPSTPVAHRGPSSGLNTPGMFRRGLDSSTSGTPLTPAARISALNIVGDLLRKVGALESKLASCRNFMYDQSPSRTSGPASGRGTKNRDGVDRRPGSTSVGDKGSGKRLEFGKPASEPASPALPSAQGVVKLLL</sequence>
<name>NDE1_MOUSE</name>
<keyword id="KW-0025">Alternative splicing</keyword>
<keyword id="KW-0131">Cell cycle</keyword>
<keyword id="KW-0132">Cell division</keyword>
<keyword id="KW-0137">Centromere</keyword>
<keyword id="KW-0158">Chromosome</keyword>
<keyword id="KW-0175">Coiled coil</keyword>
<keyword id="KW-0963">Cytoplasm</keyword>
<keyword id="KW-0968">Cytoplasmic vesicle</keyword>
<keyword id="KW-0206">Cytoskeleton</keyword>
<keyword id="KW-0217">Developmental protein</keyword>
<keyword id="KW-0221">Differentiation</keyword>
<keyword id="KW-0995">Kinetochore</keyword>
<keyword id="KW-0449">Lipoprotein</keyword>
<keyword id="KW-0472">Membrane</keyword>
<keyword id="KW-0493">Microtubule</keyword>
<keyword id="KW-0498">Mitosis</keyword>
<keyword id="KW-0524">Neurogenesis</keyword>
<keyword id="KW-0564">Palmitate</keyword>
<keyword id="KW-0597">Phosphoprotein</keyword>
<keyword id="KW-1185">Reference proteome</keyword>
<reference key="1">
    <citation type="journal article" date="2000" name="Neuron">
        <title>LIS1 regulates CNS lamination by interacting with mNudE, a central component of the centrosome.</title>
        <authorList>
            <person name="Feng Y."/>
            <person name="Olson E.C."/>
            <person name="Stukenberg P.T."/>
            <person name="Flanagan L.A."/>
            <person name="Kirschner M.W."/>
            <person name="Walsh C.A."/>
        </authorList>
    </citation>
    <scope>NUCLEOTIDE SEQUENCE [MRNA] (ISOFORM 1)</scope>
    <scope>INTERACTION WITH CENPF; CNTRL; DYNEIN; LIS1; TUBULIN GAMMA; PAFAH1B1; PCNT; SLMAP AND TCP1</scope>
    <scope>SUBCELLULAR LOCATION</scope>
    <scope>TISSUE SPECIFICITY</scope>
    <scope>DEVELOPMENTAL STAGE</scope>
</reference>
<reference key="2">
    <citation type="journal article" date="2000" name="Neuron">
        <title>A LIS1/NUDEL/cytoplasmic dynein heavy chain complex in the developing and adult nervous system.</title>
        <authorList>
            <person name="Sasaki S."/>
            <person name="Shionoya A."/>
            <person name="Ishida M."/>
            <person name="Gambello M.J."/>
            <person name="Yingling J."/>
            <person name="Wynshaw-Boris A."/>
            <person name="Hirotsune S."/>
        </authorList>
    </citation>
    <scope>NUCLEOTIDE SEQUENCE [MRNA] (ISOFORM 4)</scope>
    <scope>INTERACTION WITH PAFAH1B1</scope>
    <scope>TISSUE SPECIFICITY</scope>
</reference>
<reference key="3">
    <citation type="journal article" date="2005" name="Science">
        <title>The transcriptional landscape of the mammalian genome.</title>
        <authorList>
            <person name="Carninci P."/>
            <person name="Kasukawa T."/>
            <person name="Katayama S."/>
            <person name="Gough J."/>
            <person name="Frith M.C."/>
            <person name="Maeda N."/>
            <person name="Oyama R."/>
            <person name="Ravasi T."/>
            <person name="Lenhard B."/>
            <person name="Wells C."/>
            <person name="Kodzius R."/>
            <person name="Shimokawa K."/>
            <person name="Bajic V.B."/>
            <person name="Brenner S.E."/>
            <person name="Batalov S."/>
            <person name="Forrest A.R."/>
            <person name="Zavolan M."/>
            <person name="Davis M.J."/>
            <person name="Wilming L.G."/>
            <person name="Aidinis V."/>
            <person name="Allen J.E."/>
            <person name="Ambesi-Impiombato A."/>
            <person name="Apweiler R."/>
            <person name="Aturaliya R.N."/>
            <person name="Bailey T.L."/>
            <person name="Bansal M."/>
            <person name="Baxter L."/>
            <person name="Beisel K.W."/>
            <person name="Bersano T."/>
            <person name="Bono H."/>
            <person name="Chalk A.M."/>
            <person name="Chiu K.P."/>
            <person name="Choudhary V."/>
            <person name="Christoffels A."/>
            <person name="Clutterbuck D.R."/>
            <person name="Crowe M.L."/>
            <person name="Dalla E."/>
            <person name="Dalrymple B.P."/>
            <person name="de Bono B."/>
            <person name="Della Gatta G."/>
            <person name="di Bernardo D."/>
            <person name="Down T."/>
            <person name="Engstrom P."/>
            <person name="Fagiolini M."/>
            <person name="Faulkner G."/>
            <person name="Fletcher C.F."/>
            <person name="Fukushima T."/>
            <person name="Furuno M."/>
            <person name="Futaki S."/>
            <person name="Gariboldi M."/>
            <person name="Georgii-Hemming P."/>
            <person name="Gingeras T.R."/>
            <person name="Gojobori T."/>
            <person name="Green R.E."/>
            <person name="Gustincich S."/>
            <person name="Harbers M."/>
            <person name="Hayashi Y."/>
            <person name="Hensch T.K."/>
            <person name="Hirokawa N."/>
            <person name="Hill D."/>
            <person name="Huminiecki L."/>
            <person name="Iacono M."/>
            <person name="Ikeo K."/>
            <person name="Iwama A."/>
            <person name="Ishikawa T."/>
            <person name="Jakt M."/>
            <person name="Kanapin A."/>
            <person name="Katoh M."/>
            <person name="Kawasawa Y."/>
            <person name="Kelso J."/>
            <person name="Kitamura H."/>
            <person name="Kitano H."/>
            <person name="Kollias G."/>
            <person name="Krishnan S.P."/>
            <person name="Kruger A."/>
            <person name="Kummerfeld S.K."/>
            <person name="Kurochkin I.V."/>
            <person name="Lareau L.F."/>
            <person name="Lazarevic D."/>
            <person name="Lipovich L."/>
            <person name="Liu J."/>
            <person name="Liuni S."/>
            <person name="McWilliam S."/>
            <person name="Madan Babu M."/>
            <person name="Madera M."/>
            <person name="Marchionni L."/>
            <person name="Matsuda H."/>
            <person name="Matsuzawa S."/>
            <person name="Miki H."/>
            <person name="Mignone F."/>
            <person name="Miyake S."/>
            <person name="Morris K."/>
            <person name="Mottagui-Tabar S."/>
            <person name="Mulder N."/>
            <person name="Nakano N."/>
            <person name="Nakauchi H."/>
            <person name="Ng P."/>
            <person name="Nilsson R."/>
            <person name="Nishiguchi S."/>
            <person name="Nishikawa S."/>
            <person name="Nori F."/>
            <person name="Ohara O."/>
            <person name="Okazaki Y."/>
            <person name="Orlando V."/>
            <person name="Pang K.C."/>
            <person name="Pavan W.J."/>
            <person name="Pavesi G."/>
            <person name="Pesole G."/>
            <person name="Petrovsky N."/>
            <person name="Piazza S."/>
            <person name="Reed J."/>
            <person name="Reid J.F."/>
            <person name="Ring B.Z."/>
            <person name="Ringwald M."/>
            <person name="Rost B."/>
            <person name="Ruan Y."/>
            <person name="Salzberg S.L."/>
            <person name="Sandelin A."/>
            <person name="Schneider C."/>
            <person name="Schoenbach C."/>
            <person name="Sekiguchi K."/>
            <person name="Semple C.A."/>
            <person name="Seno S."/>
            <person name="Sessa L."/>
            <person name="Sheng Y."/>
            <person name="Shibata Y."/>
            <person name="Shimada H."/>
            <person name="Shimada K."/>
            <person name="Silva D."/>
            <person name="Sinclair B."/>
            <person name="Sperling S."/>
            <person name="Stupka E."/>
            <person name="Sugiura K."/>
            <person name="Sultana R."/>
            <person name="Takenaka Y."/>
            <person name="Taki K."/>
            <person name="Tammoja K."/>
            <person name="Tan S.L."/>
            <person name="Tang S."/>
            <person name="Taylor M.S."/>
            <person name="Tegner J."/>
            <person name="Teichmann S.A."/>
            <person name="Ueda H.R."/>
            <person name="van Nimwegen E."/>
            <person name="Verardo R."/>
            <person name="Wei C.L."/>
            <person name="Yagi K."/>
            <person name="Yamanishi H."/>
            <person name="Zabarovsky E."/>
            <person name="Zhu S."/>
            <person name="Zimmer A."/>
            <person name="Hide W."/>
            <person name="Bult C."/>
            <person name="Grimmond S.M."/>
            <person name="Teasdale R.D."/>
            <person name="Liu E.T."/>
            <person name="Brusic V."/>
            <person name="Quackenbush J."/>
            <person name="Wahlestedt C."/>
            <person name="Mattick J.S."/>
            <person name="Hume D.A."/>
            <person name="Kai C."/>
            <person name="Sasaki D."/>
            <person name="Tomaru Y."/>
            <person name="Fukuda S."/>
            <person name="Kanamori-Katayama M."/>
            <person name="Suzuki M."/>
            <person name="Aoki J."/>
            <person name="Arakawa T."/>
            <person name="Iida J."/>
            <person name="Imamura K."/>
            <person name="Itoh M."/>
            <person name="Kato T."/>
            <person name="Kawaji H."/>
            <person name="Kawagashira N."/>
            <person name="Kawashima T."/>
            <person name="Kojima M."/>
            <person name="Kondo S."/>
            <person name="Konno H."/>
            <person name="Nakano K."/>
            <person name="Ninomiya N."/>
            <person name="Nishio T."/>
            <person name="Okada M."/>
            <person name="Plessy C."/>
            <person name="Shibata K."/>
            <person name="Shiraki T."/>
            <person name="Suzuki S."/>
            <person name="Tagami M."/>
            <person name="Waki K."/>
            <person name="Watahiki A."/>
            <person name="Okamura-Oho Y."/>
            <person name="Suzuki H."/>
            <person name="Kawai J."/>
            <person name="Hayashizaki Y."/>
        </authorList>
    </citation>
    <scope>NUCLEOTIDE SEQUENCE [LARGE SCALE MRNA] (ISOFORMS 1; 2 AND 3)</scope>
    <source>
        <strain>C57BL/6J</strain>
        <strain>NOD</strain>
        <tissue>Bone marrow</tissue>
        <tissue>Embryo</tissue>
        <tissue>Embryonic kidney</tissue>
        <tissue>Thymus</tissue>
    </source>
</reference>
<reference key="4">
    <citation type="journal article" date="2004" name="Genome Res.">
        <title>The status, quality, and expansion of the NIH full-length cDNA project: the Mammalian Gene Collection (MGC).</title>
        <authorList>
            <consortium name="The MGC Project Team"/>
        </authorList>
    </citation>
    <scope>NUCLEOTIDE SEQUENCE [LARGE SCALE MRNA] (ISOFORM 1)</scope>
    <source>
        <strain>FVB/N</strain>
        <tissue>Mammary tumor</tissue>
    </source>
</reference>
<reference key="5">
    <citation type="journal article" date="2004" name="Neuron">
        <title>Mitotic spindle regulation by Nde1 controls cerebral cortical size.</title>
        <authorList>
            <person name="Feng Y."/>
            <person name="Walsh C.A."/>
        </authorList>
    </citation>
    <scope>FUNCTION</scope>
    <scope>SELF-ASSOCIATION</scope>
    <scope>INTERACTION WITH PAFAH1B1</scope>
    <scope>SUBCELLULAR LOCATION</scope>
    <scope>DEVELOPMENTAL STAGE</scope>
</reference>
<reference key="6">
    <citation type="journal article" date="2005" name="Proc. Natl. Acad. Sci. U.S.A.">
        <title>Cytoplasmic LEK1 is a regulator of microtubule function through its interaction with the LIS1 pathway.</title>
        <authorList>
            <person name="Soukoulis V."/>
            <person name="Reddy S."/>
            <person name="Pooley R.D."/>
            <person name="Feng Y."/>
            <person name="Walsh C.A."/>
            <person name="Bader D.M."/>
        </authorList>
    </citation>
    <scope>INTERACTION WITH CENPF</scope>
    <scope>SUBCELLULAR LOCATION</scope>
</reference>
<reference key="7">
    <citation type="journal article" date="2010" name="Cell">
        <title>A tissue-specific atlas of mouse protein phosphorylation and expression.</title>
        <authorList>
            <person name="Huttlin E.L."/>
            <person name="Jedrychowski M.P."/>
            <person name="Elias J.E."/>
            <person name="Goswami T."/>
            <person name="Rad R."/>
            <person name="Beausoleil S.A."/>
            <person name="Villen J."/>
            <person name="Haas W."/>
            <person name="Sowa M.E."/>
            <person name="Gygi S.P."/>
        </authorList>
    </citation>
    <scope>IDENTIFICATION BY MASS SPECTROMETRY [LARGE SCALE ANALYSIS]</scope>
    <source>
        <tissue>Spleen</tissue>
    </source>
</reference>
<reference key="8">
    <citation type="journal article" date="2011" name="Am. J. Hum. Genet.">
        <title>Human mutations in NDE1 cause extreme microcephaly with lissencephaly.</title>
        <authorList>
            <person name="Alkuraya F.S."/>
            <person name="Cai X."/>
            <person name="Emery C."/>
            <person name="Mochida G.H."/>
            <person name="Al-Dosari M.S."/>
            <person name="Felie J.M."/>
            <person name="Hill R.S."/>
            <person name="Barry B.J."/>
            <person name="Partlow J.N."/>
            <person name="Gascon G.G."/>
            <person name="Kentab A."/>
            <person name="Jan M."/>
            <person name="Shaheen R."/>
            <person name="Feng Y."/>
            <person name="Walsh C.A."/>
        </authorList>
    </citation>
    <scope>PHOSPHORYLATION AT THR-246</scope>
</reference>
<reference key="9">
    <citation type="journal article" date="2011" name="Am. J. Hum. Genet.">
        <authorList>
            <person name="Alkuraya F.S."/>
            <person name="Cai X."/>
            <person name="Emery C."/>
            <person name="Mochida G.H."/>
            <person name="Al-Dosari M.S."/>
            <person name="Felie J.M."/>
            <person name="Hill R.S."/>
            <person name="Barry B.J."/>
            <person name="Partlow J.N."/>
            <person name="Gascon G.G."/>
            <person name="Kentab A."/>
            <person name="Jan M."/>
            <person name="Shaheen R."/>
            <person name="Feng Y."/>
            <person name="Walsh C.A."/>
        </authorList>
    </citation>
    <scope>ERRATUM OF PUBMED:21529751</scope>
</reference>